<gene>
    <name type="primary">Eif3k</name>
    <name type="synonym">Eif3s12</name>
</gene>
<organism>
    <name type="scientific">Mus musculus</name>
    <name type="common">Mouse</name>
    <dbReference type="NCBI Taxonomy" id="10090"/>
    <lineage>
        <taxon>Eukaryota</taxon>
        <taxon>Metazoa</taxon>
        <taxon>Chordata</taxon>
        <taxon>Craniata</taxon>
        <taxon>Vertebrata</taxon>
        <taxon>Euteleostomi</taxon>
        <taxon>Mammalia</taxon>
        <taxon>Eutheria</taxon>
        <taxon>Euarchontoglires</taxon>
        <taxon>Glires</taxon>
        <taxon>Rodentia</taxon>
        <taxon>Myomorpha</taxon>
        <taxon>Muroidea</taxon>
        <taxon>Muridae</taxon>
        <taxon>Murinae</taxon>
        <taxon>Mus</taxon>
        <taxon>Mus</taxon>
    </lineage>
</organism>
<protein>
    <recommendedName>
        <fullName evidence="3">Eukaryotic translation initiation factor 3 subunit K</fullName>
        <shortName evidence="3">eIF3k</shortName>
    </recommendedName>
    <alternativeName>
        <fullName evidence="3">Eukaryotic translation initiation factor 3 subunit 12</fullName>
    </alternativeName>
    <alternativeName>
        <fullName evidence="3">eIF-3 p25</fullName>
    </alternativeName>
</protein>
<feature type="initiator methionine" description="Removed" evidence="3">
    <location>
        <position position="1"/>
    </location>
</feature>
<feature type="chain" id="PRO_0000123547" description="Eukaryotic translation initiation factor 3 subunit K">
    <location>
        <begin position="2"/>
        <end position="218"/>
    </location>
</feature>
<feature type="domain" description="PCI" evidence="4">
    <location>
        <begin position="42"/>
        <end position="204"/>
    </location>
</feature>
<feature type="modified residue" description="N-acetylalanine" evidence="1 3">
    <location>
        <position position="2"/>
    </location>
</feature>
<feature type="modified residue" description="Phosphothreonine" evidence="1">
    <location>
        <position position="28"/>
    </location>
</feature>
<feature type="modified residue" description="Phosphoserine" evidence="1">
    <location>
        <position position="217"/>
    </location>
</feature>
<feature type="splice variant" id="VSP_013425" description="In isoform 2." evidence="6">
    <location>
        <begin position="21"/>
        <end position="53"/>
    </location>
</feature>
<sequence>MAMFEQMRANVGKLLKGIDRYNPENLATLERYVETQAKENAYDLEANLAVLKLYQFNPAFFQTTVTAQILLKALTNLPHTDFTLCKCMIDQAHQEERPIRQILYLGDLLETCHFQAFWQALDENMDLLEGITGFEDSVRKFICHVVGITYQHIDRWLLAEMLGDLTDNQLKVWMSKYGWSADESGQVFICSQEESIKPKNIVEKIDFDSVSSIMASSQ</sequence>
<comment type="function">
    <text evidence="3 5">Component of the eukaryotic translation initiation factor 3 (eIF-3) complex, which is required for several steps in the initiation of protein synthesis. The eIF-3 complex associates with the 40S ribosome and facilitates the recruitment of eIF-1, eIF-1A, eIF-2:GTP:methionyl-tRNAi and eIF-5 to form the 43S pre-initiation complex (43S PIC). The eIF-3 complex stimulates mRNA recruitment to the 43S PIC and scanning of the mRNA for AUG recognition. The eIF-3 complex is also required for disassembly and recycling of post-termination ribosomal complexes and subsequently prevents premature joining of the 40S and 60S ribosomal subunits prior to initiation. The eIF-3 complex specifically targets and initiates translation of a subset of mRNAs involved in cell proliferation, including cell cycling, differentiation and apoptosis, and uses different modes of RNA stem-loop binding to exert either translational activation or repression.</text>
</comment>
<comment type="subunit">
    <text evidence="2 5">Component of the eukaryotic translation initiation factor 3 (eIF-3) complex, which is composed of 13 subunits: EIF3A, EIF3B, EIF3C, EIF3D, EIF3E, EIF3F, EIF3G, EIF3H, EIF3I, EIF3J, EIF3K, EIF3L and EIF3M. The eIF-3 complex appears to include 3 stable modules: module A is composed of EIF3A, EIF3B, EIF3G and EIF3I; module B is composed of EIF3F, EIF3H, and EIF3M; and module C is composed of EIF3C, EIF3D, EIF3E, EIF3K and EIF3L. EIF3C of module C binds EIF3B of module A and EIF3H of module B, thereby linking the three modules. EIF3J is a labile subunit that binds to the eIF-3 complex via EIF3B. The eIF-3 complex interacts with RPS6KB1 under conditions of nutrient depletion. Mitogenic stimulation leads to binding and activation of a complex composed of MTOR and RPTOR, leading to phosphorylation and release of RPS6KB1 and binding of EIF4B to eIF-3. Identified in a HCV IRES-mediated translation complex, at least composed of EIF3C, IGF2BP1, RPS3 and HCV RNA-replicon. Interacts with ALKBH4, IFIT1 and IFIT2.</text>
</comment>
<comment type="subcellular location">
    <subcellularLocation>
        <location evidence="3">Nucleus</location>
    </subcellularLocation>
    <subcellularLocation>
        <location evidence="3">Cytoplasm</location>
    </subcellularLocation>
</comment>
<comment type="alternative products">
    <event type="alternative splicing"/>
    <isoform>
        <id>Q9DBZ5-1</id>
        <name>1</name>
        <sequence type="displayed"/>
    </isoform>
    <isoform>
        <id>Q9DBZ5-2</id>
        <name>2</name>
        <sequence type="described" ref="VSP_013425"/>
    </isoform>
</comment>
<comment type="similarity">
    <text evidence="3">Belongs to the eIF-3 subunit K family.</text>
</comment>
<keyword id="KW-0007">Acetylation</keyword>
<keyword id="KW-0025">Alternative splicing</keyword>
<keyword id="KW-0963">Cytoplasm</keyword>
<keyword id="KW-0396">Initiation factor</keyword>
<keyword id="KW-0539">Nucleus</keyword>
<keyword id="KW-0597">Phosphoprotein</keyword>
<keyword id="KW-0648">Protein biosynthesis</keyword>
<keyword id="KW-1185">Reference proteome</keyword>
<reference key="1">
    <citation type="journal article" date="2005" name="Science">
        <title>The transcriptional landscape of the mammalian genome.</title>
        <authorList>
            <person name="Carninci P."/>
            <person name="Kasukawa T."/>
            <person name="Katayama S."/>
            <person name="Gough J."/>
            <person name="Frith M.C."/>
            <person name="Maeda N."/>
            <person name="Oyama R."/>
            <person name="Ravasi T."/>
            <person name="Lenhard B."/>
            <person name="Wells C."/>
            <person name="Kodzius R."/>
            <person name="Shimokawa K."/>
            <person name="Bajic V.B."/>
            <person name="Brenner S.E."/>
            <person name="Batalov S."/>
            <person name="Forrest A.R."/>
            <person name="Zavolan M."/>
            <person name="Davis M.J."/>
            <person name="Wilming L.G."/>
            <person name="Aidinis V."/>
            <person name="Allen J.E."/>
            <person name="Ambesi-Impiombato A."/>
            <person name="Apweiler R."/>
            <person name="Aturaliya R.N."/>
            <person name="Bailey T.L."/>
            <person name="Bansal M."/>
            <person name="Baxter L."/>
            <person name="Beisel K.W."/>
            <person name="Bersano T."/>
            <person name="Bono H."/>
            <person name="Chalk A.M."/>
            <person name="Chiu K.P."/>
            <person name="Choudhary V."/>
            <person name="Christoffels A."/>
            <person name="Clutterbuck D.R."/>
            <person name="Crowe M.L."/>
            <person name="Dalla E."/>
            <person name="Dalrymple B.P."/>
            <person name="de Bono B."/>
            <person name="Della Gatta G."/>
            <person name="di Bernardo D."/>
            <person name="Down T."/>
            <person name="Engstrom P."/>
            <person name="Fagiolini M."/>
            <person name="Faulkner G."/>
            <person name="Fletcher C.F."/>
            <person name="Fukushima T."/>
            <person name="Furuno M."/>
            <person name="Futaki S."/>
            <person name="Gariboldi M."/>
            <person name="Georgii-Hemming P."/>
            <person name="Gingeras T.R."/>
            <person name="Gojobori T."/>
            <person name="Green R.E."/>
            <person name="Gustincich S."/>
            <person name="Harbers M."/>
            <person name="Hayashi Y."/>
            <person name="Hensch T.K."/>
            <person name="Hirokawa N."/>
            <person name="Hill D."/>
            <person name="Huminiecki L."/>
            <person name="Iacono M."/>
            <person name="Ikeo K."/>
            <person name="Iwama A."/>
            <person name="Ishikawa T."/>
            <person name="Jakt M."/>
            <person name="Kanapin A."/>
            <person name="Katoh M."/>
            <person name="Kawasawa Y."/>
            <person name="Kelso J."/>
            <person name="Kitamura H."/>
            <person name="Kitano H."/>
            <person name="Kollias G."/>
            <person name="Krishnan S.P."/>
            <person name="Kruger A."/>
            <person name="Kummerfeld S.K."/>
            <person name="Kurochkin I.V."/>
            <person name="Lareau L.F."/>
            <person name="Lazarevic D."/>
            <person name="Lipovich L."/>
            <person name="Liu J."/>
            <person name="Liuni S."/>
            <person name="McWilliam S."/>
            <person name="Madan Babu M."/>
            <person name="Madera M."/>
            <person name="Marchionni L."/>
            <person name="Matsuda H."/>
            <person name="Matsuzawa S."/>
            <person name="Miki H."/>
            <person name="Mignone F."/>
            <person name="Miyake S."/>
            <person name="Morris K."/>
            <person name="Mottagui-Tabar S."/>
            <person name="Mulder N."/>
            <person name="Nakano N."/>
            <person name="Nakauchi H."/>
            <person name="Ng P."/>
            <person name="Nilsson R."/>
            <person name="Nishiguchi S."/>
            <person name="Nishikawa S."/>
            <person name="Nori F."/>
            <person name="Ohara O."/>
            <person name="Okazaki Y."/>
            <person name="Orlando V."/>
            <person name="Pang K.C."/>
            <person name="Pavan W.J."/>
            <person name="Pavesi G."/>
            <person name="Pesole G."/>
            <person name="Petrovsky N."/>
            <person name="Piazza S."/>
            <person name="Reed J."/>
            <person name="Reid J.F."/>
            <person name="Ring B.Z."/>
            <person name="Ringwald M."/>
            <person name="Rost B."/>
            <person name="Ruan Y."/>
            <person name="Salzberg S.L."/>
            <person name="Sandelin A."/>
            <person name="Schneider C."/>
            <person name="Schoenbach C."/>
            <person name="Sekiguchi K."/>
            <person name="Semple C.A."/>
            <person name="Seno S."/>
            <person name="Sessa L."/>
            <person name="Sheng Y."/>
            <person name="Shibata Y."/>
            <person name="Shimada H."/>
            <person name="Shimada K."/>
            <person name="Silva D."/>
            <person name="Sinclair B."/>
            <person name="Sperling S."/>
            <person name="Stupka E."/>
            <person name="Sugiura K."/>
            <person name="Sultana R."/>
            <person name="Takenaka Y."/>
            <person name="Taki K."/>
            <person name="Tammoja K."/>
            <person name="Tan S.L."/>
            <person name="Tang S."/>
            <person name="Taylor M.S."/>
            <person name="Tegner J."/>
            <person name="Teichmann S.A."/>
            <person name="Ueda H.R."/>
            <person name="van Nimwegen E."/>
            <person name="Verardo R."/>
            <person name="Wei C.L."/>
            <person name="Yagi K."/>
            <person name="Yamanishi H."/>
            <person name="Zabarovsky E."/>
            <person name="Zhu S."/>
            <person name="Zimmer A."/>
            <person name="Hide W."/>
            <person name="Bult C."/>
            <person name="Grimmond S.M."/>
            <person name="Teasdale R.D."/>
            <person name="Liu E.T."/>
            <person name="Brusic V."/>
            <person name="Quackenbush J."/>
            <person name="Wahlestedt C."/>
            <person name="Mattick J.S."/>
            <person name="Hume D.A."/>
            <person name="Kai C."/>
            <person name="Sasaki D."/>
            <person name="Tomaru Y."/>
            <person name="Fukuda S."/>
            <person name="Kanamori-Katayama M."/>
            <person name="Suzuki M."/>
            <person name="Aoki J."/>
            <person name="Arakawa T."/>
            <person name="Iida J."/>
            <person name="Imamura K."/>
            <person name="Itoh M."/>
            <person name="Kato T."/>
            <person name="Kawaji H."/>
            <person name="Kawagashira N."/>
            <person name="Kawashima T."/>
            <person name="Kojima M."/>
            <person name="Kondo S."/>
            <person name="Konno H."/>
            <person name="Nakano K."/>
            <person name="Ninomiya N."/>
            <person name="Nishio T."/>
            <person name="Okada M."/>
            <person name="Plessy C."/>
            <person name="Shibata K."/>
            <person name="Shiraki T."/>
            <person name="Suzuki S."/>
            <person name="Tagami M."/>
            <person name="Waki K."/>
            <person name="Watahiki A."/>
            <person name="Okamura-Oho Y."/>
            <person name="Suzuki H."/>
            <person name="Kawai J."/>
            <person name="Hayashizaki Y."/>
        </authorList>
    </citation>
    <scope>NUCLEOTIDE SEQUENCE [LARGE SCALE MRNA] (ISOFORM 1)</scope>
    <source>
        <strain>C57BL/6J</strain>
        <tissue>Lung</tissue>
    </source>
</reference>
<reference key="2">
    <citation type="journal article" date="2004" name="Genome Res.">
        <title>The status, quality, and expansion of the NIH full-length cDNA project: the Mammalian Gene Collection (MGC).</title>
        <authorList>
            <consortium name="The MGC Project Team"/>
        </authorList>
    </citation>
    <scope>NUCLEOTIDE SEQUENCE [LARGE SCALE MRNA] (ISOFORMS 1 AND 2)</scope>
    <source>
        <strain>C57BL/6J</strain>
        <strain>Czech II</strain>
        <tissue>Mammary gland</tissue>
    </source>
</reference>
<reference key="3">
    <citation type="journal article" date="2007" name="EMBO J.">
        <title>Reconstitution reveals the functional core of mammalian eIF3.</title>
        <authorList>
            <person name="Masutani M."/>
            <person name="Sonenberg N."/>
            <person name="Yokoyama S."/>
            <person name="Imataka H."/>
        </authorList>
    </citation>
    <scope>FUNCTION</scope>
    <scope>CHARACTERIZATION OF THE EIF-3 COMPLEX</scope>
    <scope>IDENTIFICATION IN THE EIF-3 COMPLEX</scope>
    <scope>IDENTIFICATION BY MASS SPECTROMETRY</scope>
</reference>
<reference key="4">
    <citation type="journal article" date="2010" name="Cell">
        <title>A tissue-specific atlas of mouse protein phosphorylation and expression.</title>
        <authorList>
            <person name="Huttlin E.L."/>
            <person name="Jedrychowski M.P."/>
            <person name="Elias J.E."/>
            <person name="Goswami T."/>
            <person name="Rad R."/>
            <person name="Beausoleil S.A."/>
            <person name="Villen J."/>
            <person name="Haas W."/>
            <person name="Sowa M.E."/>
            <person name="Gygi S.P."/>
        </authorList>
    </citation>
    <scope>IDENTIFICATION BY MASS SPECTROMETRY [LARGE SCALE ANALYSIS]</scope>
    <source>
        <tissue>Brain</tissue>
        <tissue>Brown adipose tissue</tissue>
        <tissue>Heart</tissue>
        <tissue>Kidney</tissue>
        <tissue>Liver</tissue>
        <tissue>Lung</tissue>
        <tissue>Pancreas</tissue>
        <tissue>Spleen</tissue>
        <tissue>Testis</tissue>
    </source>
</reference>
<dbReference type="EMBL" id="AK004664">
    <property type="protein sequence ID" value="BAB23454.1"/>
    <property type="molecule type" value="mRNA"/>
</dbReference>
<dbReference type="EMBL" id="BC027638">
    <property type="protein sequence ID" value="AAH27638.1"/>
    <property type="molecule type" value="mRNA"/>
</dbReference>
<dbReference type="EMBL" id="BC091749">
    <property type="protein sequence ID" value="AAH91749.1"/>
    <property type="molecule type" value="mRNA"/>
</dbReference>
<dbReference type="CCDS" id="CCDS21062.1">
    <molecule id="Q9DBZ5-1"/>
</dbReference>
<dbReference type="CCDS" id="CCDS85254.1">
    <molecule id="Q9DBZ5-2"/>
</dbReference>
<dbReference type="RefSeq" id="NP_001272871.1">
    <molecule id="Q9DBZ5-2"/>
    <property type="nucleotide sequence ID" value="NM_001285942.2"/>
</dbReference>
<dbReference type="RefSeq" id="NP_082935.1">
    <molecule id="Q9DBZ5-1"/>
    <property type="nucleotide sequence ID" value="NM_028659.4"/>
</dbReference>
<dbReference type="SMR" id="Q9DBZ5"/>
<dbReference type="BioGRID" id="216289">
    <property type="interactions" value="24"/>
</dbReference>
<dbReference type="FunCoup" id="Q9DBZ5">
    <property type="interactions" value="2431"/>
</dbReference>
<dbReference type="IntAct" id="Q9DBZ5">
    <property type="interactions" value="3"/>
</dbReference>
<dbReference type="MINT" id="Q9DBZ5"/>
<dbReference type="STRING" id="10090.ENSMUSP00000066038"/>
<dbReference type="iPTMnet" id="Q9DBZ5"/>
<dbReference type="PhosphoSitePlus" id="Q9DBZ5"/>
<dbReference type="SwissPalm" id="Q9DBZ5"/>
<dbReference type="jPOST" id="Q9DBZ5"/>
<dbReference type="PaxDb" id="10090-ENSMUSP00000066038"/>
<dbReference type="PeptideAtlas" id="Q9DBZ5"/>
<dbReference type="ProteomicsDB" id="277847">
    <molecule id="Q9DBZ5-1"/>
</dbReference>
<dbReference type="ProteomicsDB" id="277848">
    <molecule id="Q9DBZ5-2"/>
</dbReference>
<dbReference type="Pumba" id="Q9DBZ5"/>
<dbReference type="TopDownProteomics" id="Q9DBZ5-1">
    <molecule id="Q9DBZ5-1"/>
</dbReference>
<dbReference type="Antibodypedia" id="30132">
    <property type="antibodies" value="241 antibodies from 30 providers"/>
</dbReference>
<dbReference type="Ensembl" id="ENSMUST00000066070.7">
    <molecule id="Q9DBZ5-1"/>
    <property type="protein sequence ID" value="ENSMUSP00000066038.6"/>
    <property type="gene ID" value="ENSMUSG00000053565.11"/>
</dbReference>
<dbReference type="Ensembl" id="ENSMUST00000207683.2">
    <molecule id="Q9DBZ5-2"/>
    <property type="protein sequence ID" value="ENSMUSP00000146940.2"/>
    <property type="gene ID" value="ENSMUSG00000053565.11"/>
</dbReference>
<dbReference type="GeneID" id="73830"/>
<dbReference type="KEGG" id="mmu:73830"/>
<dbReference type="UCSC" id="uc009gai.2">
    <molecule id="Q9DBZ5-1"/>
    <property type="organism name" value="mouse"/>
</dbReference>
<dbReference type="UCSC" id="uc009gaj.2">
    <molecule id="Q9DBZ5-2"/>
    <property type="organism name" value="mouse"/>
</dbReference>
<dbReference type="AGR" id="MGI:1921080"/>
<dbReference type="CTD" id="27335"/>
<dbReference type="MGI" id="MGI:1921080">
    <property type="gene designation" value="Eif3k"/>
</dbReference>
<dbReference type="VEuPathDB" id="HostDB:ENSMUSG00000053565"/>
<dbReference type="eggNOG" id="KOG3252">
    <property type="taxonomic scope" value="Eukaryota"/>
</dbReference>
<dbReference type="GeneTree" id="ENSGT00390000009409"/>
<dbReference type="HOGENOM" id="CLU_076723_1_0_1"/>
<dbReference type="InParanoid" id="Q9DBZ5"/>
<dbReference type="OMA" id="GDDLCAD"/>
<dbReference type="OrthoDB" id="337745at2759"/>
<dbReference type="PhylomeDB" id="Q9DBZ5"/>
<dbReference type="TreeFam" id="TF314893"/>
<dbReference type="Reactome" id="R-MMU-156827">
    <property type="pathway name" value="L13a-mediated translational silencing of Ceruloplasmin expression"/>
</dbReference>
<dbReference type="Reactome" id="R-MMU-72649">
    <property type="pathway name" value="Translation initiation complex formation"/>
</dbReference>
<dbReference type="Reactome" id="R-MMU-72689">
    <property type="pathway name" value="Formation of a pool of free 40S subunits"/>
</dbReference>
<dbReference type="Reactome" id="R-MMU-72695">
    <property type="pathway name" value="Formation of the ternary complex, and subsequently, the 43S complex"/>
</dbReference>
<dbReference type="Reactome" id="R-MMU-72702">
    <property type="pathway name" value="Ribosomal scanning and start codon recognition"/>
</dbReference>
<dbReference type="Reactome" id="R-MMU-72706">
    <property type="pathway name" value="GTP hydrolysis and joining of the 60S ribosomal subunit"/>
</dbReference>
<dbReference type="BioGRID-ORCS" id="73830">
    <property type="hits" value="19 hits in 80 CRISPR screens"/>
</dbReference>
<dbReference type="ChiTaRS" id="Eif3k">
    <property type="organism name" value="mouse"/>
</dbReference>
<dbReference type="PRO" id="PR:Q9DBZ5"/>
<dbReference type="Proteomes" id="UP000000589">
    <property type="component" value="Chromosome 7"/>
</dbReference>
<dbReference type="RNAct" id="Q9DBZ5">
    <property type="molecule type" value="protein"/>
</dbReference>
<dbReference type="Bgee" id="ENSMUSG00000053565">
    <property type="expression patterns" value="Expressed in floor plate of midbrain and 260 other cell types or tissues"/>
</dbReference>
<dbReference type="ExpressionAtlas" id="Q9DBZ5">
    <property type="expression patterns" value="baseline and differential"/>
</dbReference>
<dbReference type="GO" id="GO:0005829">
    <property type="term" value="C:cytosol"/>
    <property type="evidence" value="ECO:0007669"/>
    <property type="project" value="Ensembl"/>
</dbReference>
<dbReference type="GO" id="GO:0016282">
    <property type="term" value="C:eukaryotic 43S preinitiation complex"/>
    <property type="evidence" value="ECO:0007669"/>
    <property type="project" value="UniProtKB-UniRule"/>
</dbReference>
<dbReference type="GO" id="GO:0033290">
    <property type="term" value="C:eukaryotic 48S preinitiation complex"/>
    <property type="evidence" value="ECO:0007669"/>
    <property type="project" value="UniProtKB-UniRule"/>
</dbReference>
<dbReference type="GO" id="GO:0005852">
    <property type="term" value="C:eukaryotic translation initiation factor 3 complex"/>
    <property type="evidence" value="ECO:0000314"/>
    <property type="project" value="UniProtKB"/>
</dbReference>
<dbReference type="GO" id="GO:0005634">
    <property type="term" value="C:nucleus"/>
    <property type="evidence" value="ECO:0007669"/>
    <property type="project" value="UniProtKB-SubCell"/>
</dbReference>
<dbReference type="GO" id="GO:0043022">
    <property type="term" value="F:ribosome binding"/>
    <property type="evidence" value="ECO:0007669"/>
    <property type="project" value="InterPro"/>
</dbReference>
<dbReference type="GO" id="GO:0003723">
    <property type="term" value="F:RNA binding"/>
    <property type="evidence" value="ECO:0007669"/>
    <property type="project" value="UniProtKB-UniRule"/>
</dbReference>
<dbReference type="GO" id="GO:0003743">
    <property type="term" value="F:translation initiation factor activity"/>
    <property type="evidence" value="ECO:0007669"/>
    <property type="project" value="UniProtKB-UniRule"/>
</dbReference>
<dbReference type="GO" id="GO:0001732">
    <property type="term" value="P:formation of cytoplasmic translation initiation complex"/>
    <property type="evidence" value="ECO:0007669"/>
    <property type="project" value="UniProtKB-UniRule"/>
</dbReference>
<dbReference type="GO" id="GO:0006446">
    <property type="term" value="P:regulation of translational initiation"/>
    <property type="evidence" value="ECO:0007669"/>
    <property type="project" value="InterPro"/>
</dbReference>
<dbReference type="GO" id="GO:0006413">
    <property type="term" value="P:translational initiation"/>
    <property type="evidence" value="ECO:0000314"/>
    <property type="project" value="UniProtKB"/>
</dbReference>
<dbReference type="FunFam" id="1.10.10.10:FF:000212">
    <property type="entry name" value="Eukaryotic translation initiation factor 3 subunit K"/>
    <property type="match status" value="1"/>
</dbReference>
<dbReference type="FunFam" id="1.25.40.250:FF:000001">
    <property type="entry name" value="Eukaryotic translation initiation factor 3 subunit K"/>
    <property type="match status" value="1"/>
</dbReference>
<dbReference type="Gene3D" id="1.25.40.250">
    <property type="entry name" value="ARM repeat, domain 1"/>
    <property type="match status" value="1"/>
</dbReference>
<dbReference type="Gene3D" id="1.10.10.10">
    <property type="entry name" value="Winged helix-like DNA-binding domain superfamily/Winged helix DNA-binding domain"/>
    <property type="match status" value="1"/>
</dbReference>
<dbReference type="HAMAP" id="MF_03010">
    <property type="entry name" value="eIF3k"/>
    <property type="match status" value="1"/>
</dbReference>
<dbReference type="InterPro" id="IPR016024">
    <property type="entry name" value="ARM-type_fold"/>
</dbReference>
<dbReference type="InterPro" id="IPR033464">
    <property type="entry name" value="CSN8_PSD8_EIF3K"/>
</dbReference>
<dbReference type="InterPro" id="IPR009374">
    <property type="entry name" value="eIF3k"/>
</dbReference>
<dbReference type="InterPro" id="IPR000717">
    <property type="entry name" value="PCI_dom"/>
</dbReference>
<dbReference type="InterPro" id="IPR016020">
    <property type="entry name" value="Transl_init_fac_sub12_N_euk"/>
</dbReference>
<dbReference type="InterPro" id="IPR036388">
    <property type="entry name" value="WH-like_DNA-bd_sf"/>
</dbReference>
<dbReference type="InterPro" id="IPR036390">
    <property type="entry name" value="WH_DNA-bd_sf"/>
</dbReference>
<dbReference type="PANTHER" id="PTHR13022">
    <property type="entry name" value="EUKARYOTIC TRANSLATION INITIATION FACTOR 3 SUBUNIT 11"/>
    <property type="match status" value="1"/>
</dbReference>
<dbReference type="PANTHER" id="PTHR13022:SF0">
    <property type="entry name" value="EUKARYOTIC TRANSLATION INITIATION FACTOR 3 SUBUNIT K"/>
    <property type="match status" value="1"/>
</dbReference>
<dbReference type="Pfam" id="PF10075">
    <property type="entry name" value="CSN8_PSD8_EIF3K"/>
    <property type="match status" value="1"/>
</dbReference>
<dbReference type="SUPFAM" id="SSF48371">
    <property type="entry name" value="ARM repeat"/>
    <property type="match status" value="1"/>
</dbReference>
<dbReference type="SUPFAM" id="SSF46785">
    <property type="entry name" value="Winged helix' DNA-binding domain"/>
    <property type="match status" value="1"/>
</dbReference>
<dbReference type="PROSITE" id="PS50250">
    <property type="entry name" value="PCI"/>
    <property type="match status" value="1"/>
</dbReference>
<evidence type="ECO:0000250" key="1">
    <source>
        <dbReference type="UniProtKB" id="Q9UBQ5"/>
    </source>
</evidence>
<evidence type="ECO:0000255" key="2">
    <source>
        <dbReference type="HAMAP-Rule" id="MF_03002"/>
    </source>
</evidence>
<evidence type="ECO:0000255" key="3">
    <source>
        <dbReference type="HAMAP-Rule" id="MF_03010"/>
    </source>
</evidence>
<evidence type="ECO:0000255" key="4">
    <source>
        <dbReference type="PROSITE-ProRule" id="PRU01185"/>
    </source>
</evidence>
<evidence type="ECO:0000269" key="5">
    <source>
    </source>
</evidence>
<evidence type="ECO:0000303" key="6">
    <source>
    </source>
</evidence>
<proteinExistence type="evidence at protein level"/>
<name>EIF3K_MOUSE</name>
<accession>Q9DBZ5</accession>
<accession>Q58EU9</accession>
<accession>Q8K3A1</accession>